<comment type="function">
    <text evidence="1">Transcription regulator that activates transcription by stimulating RNA polymerase (RNAP) recycling in case of stress conditions such as supercoiled DNA or high salt concentrations. Probably acts by releasing the RNAP, when it is trapped or immobilized on tightly supercoiled DNA. Does not activate transcription on linear DNA. Probably not involved in DNA repair.</text>
</comment>
<comment type="subunit">
    <text evidence="1">Interacts with the RNAP. Has a higher affinity for the core RNAP than for the holoenzyme. Its ATPase activity is stimulated by binding to RNAP.</text>
</comment>
<comment type="similarity">
    <text evidence="1">Belongs to the SNF2/RAD54 helicase family. RapA subfamily.</text>
</comment>
<gene>
    <name evidence="1" type="primary">rapA</name>
    <name type="ordered locus">Sbal223_3733</name>
</gene>
<dbReference type="EC" id="3.6.4.-" evidence="1"/>
<dbReference type="EMBL" id="CP001252">
    <property type="protein sequence ID" value="ACK48211.1"/>
    <property type="molecule type" value="Genomic_DNA"/>
</dbReference>
<dbReference type="RefSeq" id="WP_012197673.1">
    <property type="nucleotide sequence ID" value="NC_011663.1"/>
</dbReference>
<dbReference type="SMR" id="B8ECC6"/>
<dbReference type="GeneID" id="11773924"/>
<dbReference type="KEGG" id="sbp:Sbal223_3733"/>
<dbReference type="HOGENOM" id="CLU_011520_0_0_6"/>
<dbReference type="Proteomes" id="UP000002507">
    <property type="component" value="Chromosome"/>
</dbReference>
<dbReference type="GO" id="GO:0005524">
    <property type="term" value="F:ATP binding"/>
    <property type="evidence" value="ECO:0007669"/>
    <property type="project" value="UniProtKB-UniRule"/>
</dbReference>
<dbReference type="GO" id="GO:0003677">
    <property type="term" value="F:DNA binding"/>
    <property type="evidence" value="ECO:0007669"/>
    <property type="project" value="UniProtKB-KW"/>
</dbReference>
<dbReference type="GO" id="GO:0004386">
    <property type="term" value="F:helicase activity"/>
    <property type="evidence" value="ECO:0007669"/>
    <property type="project" value="UniProtKB-UniRule"/>
</dbReference>
<dbReference type="GO" id="GO:0016817">
    <property type="term" value="F:hydrolase activity, acting on acid anhydrides"/>
    <property type="evidence" value="ECO:0007669"/>
    <property type="project" value="InterPro"/>
</dbReference>
<dbReference type="GO" id="GO:0006355">
    <property type="term" value="P:regulation of DNA-templated transcription"/>
    <property type="evidence" value="ECO:0007669"/>
    <property type="project" value="UniProtKB-UniRule"/>
</dbReference>
<dbReference type="CDD" id="cd18011">
    <property type="entry name" value="DEXDc_RapA"/>
    <property type="match status" value="1"/>
</dbReference>
<dbReference type="CDD" id="cd18793">
    <property type="entry name" value="SF2_C_SNF"/>
    <property type="match status" value="1"/>
</dbReference>
<dbReference type="Gene3D" id="2.30.30.140">
    <property type="match status" value="1"/>
</dbReference>
<dbReference type="Gene3D" id="2.30.30.930">
    <property type="match status" value="1"/>
</dbReference>
<dbReference type="Gene3D" id="3.30.360.80">
    <property type="match status" value="1"/>
</dbReference>
<dbReference type="Gene3D" id="6.10.140.1500">
    <property type="match status" value="1"/>
</dbReference>
<dbReference type="Gene3D" id="6.10.140.2230">
    <property type="match status" value="1"/>
</dbReference>
<dbReference type="Gene3D" id="3.40.50.300">
    <property type="entry name" value="P-loop containing nucleotide triphosphate hydrolases"/>
    <property type="match status" value="1"/>
</dbReference>
<dbReference type="Gene3D" id="3.40.50.10810">
    <property type="entry name" value="Tandem AAA-ATPase domain"/>
    <property type="match status" value="1"/>
</dbReference>
<dbReference type="HAMAP" id="MF_01821">
    <property type="entry name" value="Helicase_RapA"/>
    <property type="match status" value="1"/>
</dbReference>
<dbReference type="InterPro" id="IPR014001">
    <property type="entry name" value="Helicase_ATP-bd"/>
</dbReference>
<dbReference type="InterPro" id="IPR001650">
    <property type="entry name" value="Helicase_C-like"/>
</dbReference>
<dbReference type="InterPro" id="IPR023949">
    <property type="entry name" value="Helicase_RapA"/>
</dbReference>
<dbReference type="InterPro" id="IPR027417">
    <property type="entry name" value="P-loop_NTPase"/>
</dbReference>
<dbReference type="InterPro" id="IPR022737">
    <property type="entry name" value="RapA_C"/>
</dbReference>
<dbReference type="InterPro" id="IPR038718">
    <property type="entry name" value="SNF2-like_sf"/>
</dbReference>
<dbReference type="InterPro" id="IPR049730">
    <property type="entry name" value="SNF2/RAD54-like_C"/>
</dbReference>
<dbReference type="InterPro" id="IPR000330">
    <property type="entry name" value="SNF2_N"/>
</dbReference>
<dbReference type="InterPro" id="IPR040765">
    <property type="entry name" value="Tudor_1_RapA"/>
</dbReference>
<dbReference type="InterPro" id="IPR040766">
    <property type="entry name" value="Tudor_2_RapA"/>
</dbReference>
<dbReference type="NCBIfam" id="NF003426">
    <property type="entry name" value="PRK04914.1"/>
    <property type="match status" value="1"/>
</dbReference>
<dbReference type="PANTHER" id="PTHR45766">
    <property type="entry name" value="DNA ANNEALING HELICASE AND ENDONUCLEASE ZRANB3 FAMILY MEMBER"/>
    <property type="match status" value="1"/>
</dbReference>
<dbReference type="PANTHER" id="PTHR45766:SF6">
    <property type="entry name" value="SWI_SNF-RELATED MATRIX-ASSOCIATED ACTIN-DEPENDENT REGULATOR OF CHROMATIN SUBFAMILY A-LIKE PROTEIN 1"/>
    <property type="match status" value="1"/>
</dbReference>
<dbReference type="Pfam" id="PF00271">
    <property type="entry name" value="Helicase_C"/>
    <property type="match status" value="1"/>
</dbReference>
<dbReference type="Pfam" id="PF12137">
    <property type="entry name" value="RapA_C"/>
    <property type="match status" value="1"/>
</dbReference>
<dbReference type="Pfam" id="PF00176">
    <property type="entry name" value="SNF2-rel_dom"/>
    <property type="match status" value="1"/>
</dbReference>
<dbReference type="Pfam" id="PF18339">
    <property type="entry name" value="Tudor_1_RapA"/>
    <property type="match status" value="1"/>
</dbReference>
<dbReference type="Pfam" id="PF18337">
    <property type="entry name" value="Tudor_RapA"/>
    <property type="match status" value="1"/>
</dbReference>
<dbReference type="SMART" id="SM00487">
    <property type="entry name" value="DEXDc"/>
    <property type="match status" value="1"/>
</dbReference>
<dbReference type="SMART" id="SM00490">
    <property type="entry name" value="HELICc"/>
    <property type="match status" value="1"/>
</dbReference>
<dbReference type="SUPFAM" id="SSF52540">
    <property type="entry name" value="P-loop containing nucleoside triphosphate hydrolases"/>
    <property type="match status" value="2"/>
</dbReference>
<dbReference type="PROSITE" id="PS51192">
    <property type="entry name" value="HELICASE_ATP_BIND_1"/>
    <property type="match status" value="1"/>
</dbReference>
<dbReference type="PROSITE" id="PS51194">
    <property type="entry name" value="HELICASE_CTER"/>
    <property type="match status" value="1"/>
</dbReference>
<evidence type="ECO:0000255" key="1">
    <source>
        <dbReference type="HAMAP-Rule" id="MF_01821"/>
    </source>
</evidence>
<organism>
    <name type="scientific">Shewanella baltica (strain OS223)</name>
    <dbReference type="NCBI Taxonomy" id="407976"/>
    <lineage>
        <taxon>Bacteria</taxon>
        <taxon>Pseudomonadati</taxon>
        <taxon>Pseudomonadota</taxon>
        <taxon>Gammaproteobacteria</taxon>
        <taxon>Alteromonadales</taxon>
        <taxon>Shewanellaceae</taxon>
        <taxon>Shewanella</taxon>
    </lineage>
</organism>
<feature type="chain" id="PRO_1000188190" description="RNA polymerase-associated protein RapA">
    <location>
        <begin position="1"/>
        <end position="968"/>
    </location>
</feature>
<feature type="domain" description="Helicase ATP-binding" evidence="1">
    <location>
        <begin position="163"/>
        <end position="332"/>
    </location>
</feature>
<feature type="domain" description="Helicase C-terminal" evidence="1">
    <location>
        <begin position="491"/>
        <end position="655"/>
    </location>
</feature>
<feature type="short sequence motif" description="DEAH box">
    <location>
        <begin position="278"/>
        <end position="281"/>
    </location>
</feature>
<feature type="binding site" evidence="1">
    <location>
        <begin position="176"/>
        <end position="183"/>
    </location>
    <ligand>
        <name>ATP</name>
        <dbReference type="ChEBI" id="CHEBI:30616"/>
    </ligand>
</feature>
<keyword id="KW-0010">Activator</keyword>
<keyword id="KW-0067">ATP-binding</keyword>
<keyword id="KW-0238">DNA-binding</keyword>
<keyword id="KW-0347">Helicase</keyword>
<keyword id="KW-0378">Hydrolase</keyword>
<keyword id="KW-0547">Nucleotide-binding</keyword>
<keyword id="KW-0804">Transcription</keyword>
<keyword id="KW-0805">Transcription regulation</keyword>
<protein>
    <recommendedName>
        <fullName evidence="1">RNA polymerase-associated protein RapA</fullName>
        <ecNumber evidence="1">3.6.4.-</ecNumber>
    </recommendedName>
    <alternativeName>
        <fullName evidence="1">ATP-dependent helicase HepA</fullName>
    </alternativeName>
</protein>
<reference key="1">
    <citation type="submission" date="2008-12" db="EMBL/GenBank/DDBJ databases">
        <title>Complete sequence of chromosome of Shewanella baltica OS223.</title>
        <authorList>
            <consortium name="US DOE Joint Genome Institute"/>
            <person name="Lucas S."/>
            <person name="Copeland A."/>
            <person name="Lapidus A."/>
            <person name="Glavina del Rio T."/>
            <person name="Dalin E."/>
            <person name="Tice H."/>
            <person name="Bruce D."/>
            <person name="Goodwin L."/>
            <person name="Pitluck S."/>
            <person name="Chertkov O."/>
            <person name="Meincke L."/>
            <person name="Brettin T."/>
            <person name="Detter J.C."/>
            <person name="Han C."/>
            <person name="Kuske C.R."/>
            <person name="Larimer F."/>
            <person name="Land M."/>
            <person name="Hauser L."/>
            <person name="Kyrpides N."/>
            <person name="Ovchinnikova G."/>
            <person name="Brettar I."/>
            <person name="Rodrigues J."/>
            <person name="Konstantinidis K."/>
            <person name="Tiedje J."/>
        </authorList>
    </citation>
    <scope>NUCLEOTIDE SEQUENCE [LARGE SCALE GENOMIC DNA]</scope>
    <source>
        <strain>OS223</strain>
    </source>
</reference>
<sequence>MPFALGQRWISDTESELGLGTVVQVEGRMVTVLFPATGENRMFSRAEAPLTRVIYNPGDSVESHEGWSLAVSELTEKDGIVIYHGIHSETGEQVTLRETLLNHNIRFNKPQDRLFAGQIDRLDRFGVRYQCQMLRHKLASSDLLGLQGPRVGLIPHQMWIAHEVGRRYAPRVLLADEVGLGKTIEAGLIIHQQLLTGRAERILIIVPDTLRHQWLVEMLRRFNLRFSVFDEDRCVEAYADHDNPFYTEQLVICSLELLRKKKRLDQALDADWDLLVVDEAHHLEWTEEAPSRAYQVVEALSEVIPGVLLLTATPDQLGHESHFARLRLLDPDRFYDYDAFLAEEDSYKDVAIAAEALAGNAKLPDAAINSLTELLGEKDISPSIRLIQADGIDAEVQQAARSELLQELLDRHGTGRVLYRNSRASVKGFPKRFFNAYPHAMPDQYQTAARVSGMMGGHKSLEAKAAQALSPEKLYQEFEDNSASWWKFDPRVDWLIEFLKSHRSKKVLIIASQAETALSLEEALRTREGIQATVFHEGMSIIERDKAGAYFAQEEGGAQALICSEIGSEGRNFQFASHLVLFDLPLNPDLLEQRIGRLDRIGQKNDIQIHLPYLEDTAQERLMQWYHQGLNAFELTCPSGHVLYSEFAEDLLNVLVVDDSDELTNLLNHTQSRYKELKHAMEQGRDKLLEINSHGGEKAMAIVQRLAQNDGDTHLIGSVIRLWDIIGVDQEDKGENSIILRPSEHMMFPTYPGLPEDGVTVTFDRDTALSRDDIALITQEHPLVQTGLDLITGSETGTTSVAILKNKALPAGTLFLELIYMADASAPKSSQLYRYLPPTPIRVLLDKNGNDLSAKVDYASFDKQLSAVNRHIGGKLVTASQPILHPLFAKGEEYAQVVVDEMVAQAREKMTQQLSAELSRLESLKAVNPNIREEELEYLRNQMQELNTYLDASQLQLDAIRMVLVSHV</sequence>
<name>RAPA_SHEB2</name>
<accession>B8ECC6</accession>
<proteinExistence type="inferred from homology"/>